<name>GRPE_PARL1</name>
<keyword id="KW-0143">Chaperone</keyword>
<keyword id="KW-0963">Cytoplasm</keyword>
<keyword id="KW-1185">Reference proteome</keyword>
<keyword id="KW-0346">Stress response</keyword>
<protein>
    <recommendedName>
        <fullName evidence="1">Protein GrpE</fullName>
    </recommendedName>
    <alternativeName>
        <fullName evidence="1">HSP-70 cofactor</fullName>
    </alternativeName>
</protein>
<reference key="1">
    <citation type="journal article" date="2011" name="Stand. Genomic Sci.">
        <title>Complete genome sequence of Parvibaculum lavamentivorans type strain (DS-1(T)).</title>
        <authorList>
            <person name="Schleheck D."/>
            <person name="Weiss M."/>
            <person name="Pitluck S."/>
            <person name="Bruce D."/>
            <person name="Land M.L."/>
            <person name="Han S."/>
            <person name="Saunders E."/>
            <person name="Tapia R."/>
            <person name="Detter C."/>
            <person name="Brettin T."/>
            <person name="Han J."/>
            <person name="Woyke T."/>
            <person name="Goodwin L."/>
            <person name="Pennacchio L."/>
            <person name="Nolan M."/>
            <person name="Cook A.M."/>
            <person name="Kjelleberg S."/>
            <person name="Thomas T."/>
        </authorList>
    </citation>
    <scope>NUCLEOTIDE SEQUENCE [LARGE SCALE GENOMIC DNA]</scope>
    <source>
        <strain>DS-1 / DSM 13023 / NCIMB 13966</strain>
    </source>
</reference>
<feature type="chain" id="PRO_1000164209" description="Protein GrpE">
    <location>
        <begin position="1"/>
        <end position="213"/>
    </location>
</feature>
<feature type="region of interest" description="Disordered" evidence="2">
    <location>
        <begin position="1"/>
        <end position="43"/>
    </location>
</feature>
<feature type="compositionally biased region" description="Basic and acidic residues" evidence="2">
    <location>
        <begin position="1"/>
        <end position="23"/>
    </location>
</feature>
<feature type="compositionally biased region" description="Low complexity" evidence="2">
    <location>
        <begin position="29"/>
        <end position="43"/>
    </location>
</feature>
<gene>
    <name evidence="1" type="primary">grpE</name>
    <name type="ordered locus">Plav_3578</name>
</gene>
<dbReference type="EMBL" id="CP000774">
    <property type="protein sequence ID" value="ABS65176.1"/>
    <property type="molecule type" value="Genomic_DNA"/>
</dbReference>
<dbReference type="RefSeq" id="WP_012112436.1">
    <property type="nucleotide sequence ID" value="NC_009719.1"/>
</dbReference>
<dbReference type="SMR" id="A7HZ43"/>
<dbReference type="STRING" id="402881.Plav_3578"/>
<dbReference type="KEGG" id="pla:Plav_3578"/>
<dbReference type="eggNOG" id="COG0576">
    <property type="taxonomic scope" value="Bacteria"/>
</dbReference>
<dbReference type="HOGENOM" id="CLU_057217_0_2_5"/>
<dbReference type="OrthoDB" id="9789811at2"/>
<dbReference type="Proteomes" id="UP000006377">
    <property type="component" value="Chromosome"/>
</dbReference>
<dbReference type="GO" id="GO:0005737">
    <property type="term" value="C:cytoplasm"/>
    <property type="evidence" value="ECO:0007669"/>
    <property type="project" value="UniProtKB-SubCell"/>
</dbReference>
<dbReference type="GO" id="GO:0000774">
    <property type="term" value="F:adenyl-nucleotide exchange factor activity"/>
    <property type="evidence" value="ECO:0007669"/>
    <property type="project" value="InterPro"/>
</dbReference>
<dbReference type="GO" id="GO:0042803">
    <property type="term" value="F:protein homodimerization activity"/>
    <property type="evidence" value="ECO:0007669"/>
    <property type="project" value="InterPro"/>
</dbReference>
<dbReference type="GO" id="GO:0051087">
    <property type="term" value="F:protein-folding chaperone binding"/>
    <property type="evidence" value="ECO:0007669"/>
    <property type="project" value="InterPro"/>
</dbReference>
<dbReference type="GO" id="GO:0051082">
    <property type="term" value="F:unfolded protein binding"/>
    <property type="evidence" value="ECO:0007669"/>
    <property type="project" value="TreeGrafter"/>
</dbReference>
<dbReference type="GO" id="GO:0006457">
    <property type="term" value="P:protein folding"/>
    <property type="evidence" value="ECO:0007669"/>
    <property type="project" value="InterPro"/>
</dbReference>
<dbReference type="CDD" id="cd00446">
    <property type="entry name" value="GrpE"/>
    <property type="match status" value="1"/>
</dbReference>
<dbReference type="FunFam" id="2.30.22.10:FF:000001">
    <property type="entry name" value="Protein GrpE"/>
    <property type="match status" value="1"/>
</dbReference>
<dbReference type="Gene3D" id="3.90.20.20">
    <property type="match status" value="1"/>
</dbReference>
<dbReference type="Gene3D" id="2.30.22.10">
    <property type="entry name" value="Head domain of nucleotide exchange factor GrpE"/>
    <property type="match status" value="1"/>
</dbReference>
<dbReference type="HAMAP" id="MF_01151">
    <property type="entry name" value="GrpE"/>
    <property type="match status" value="1"/>
</dbReference>
<dbReference type="InterPro" id="IPR000740">
    <property type="entry name" value="GrpE"/>
</dbReference>
<dbReference type="InterPro" id="IPR013805">
    <property type="entry name" value="GrpE_coiled_coil"/>
</dbReference>
<dbReference type="InterPro" id="IPR009012">
    <property type="entry name" value="GrpE_head"/>
</dbReference>
<dbReference type="NCBIfam" id="NF010739">
    <property type="entry name" value="PRK14141.1"/>
    <property type="match status" value="1"/>
</dbReference>
<dbReference type="PANTHER" id="PTHR21237">
    <property type="entry name" value="GRPE PROTEIN"/>
    <property type="match status" value="1"/>
</dbReference>
<dbReference type="PANTHER" id="PTHR21237:SF23">
    <property type="entry name" value="GRPE PROTEIN HOMOLOG, MITOCHONDRIAL"/>
    <property type="match status" value="1"/>
</dbReference>
<dbReference type="Pfam" id="PF01025">
    <property type="entry name" value="GrpE"/>
    <property type="match status" value="1"/>
</dbReference>
<dbReference type="PRINTS" id="PR00773">
    <property type="entry name" value="GRPEPROTEIN"/>
</dbReference>
<dbReference type="SUPFAM" id="SSF58014">
    <property type="entry name" value="Coiled-coil domain of nucleotide exchange factor GrpE"/>
    <property type="match status" value="1"/>
</dbReference>
<dbReference type="SUPFAM" id="SSF51064">
    <property type="entry name" value="Head domain of nucleotide exchange factor GrpE"/>
    <property type="match status" value="1"/>
</dbReference>
<dbReference type="PROSITE" id="PS01071">
    <property type="entry name" value="GRPE"/>
    <property type="match status" value="1"/>
</dbReference>
<evidence type="ECO:0000255" key="1">
    <source>
        <dbReference type="HAMAP-Rule" id="MF_01151"/>
    </source>
</evidence>
<evidence type="ECO:0000256" key="2">
    <source>
        <dbReference type="SAM" id="MobiDB-lite"/>
    </source>
</evidence>
<sequence length="213" mass="23138">MSDEKKPEAETSESLQKREEKLAETLASEPAAQGEAEDAAAAGPDVAALEAEISDLRNRLLRAAADMENNRKRAEREKQDAQRYAAANFARDMLEVSDNLRRAIATLKEDERAEAAESVKAMIEGVEMTDRQLVTIFERHGIREITPQPGERFDPNLHEAMFEVPGTDQPAGTVVHVLGAGYMIGDRLLRAARVGVAKADDGAAKGGKVDTIA</sequence>
<proteinExistence type="inferred from homology"/>
<organism>
    <name type="scientific">Parvibaculum lavamentivorans (strain DS-1 / DSM 13023 / NCIMB 13966)</name>
    <dbReference type="NCBI Taxonomy" id="402881"/>
    <lineage>
        <taxon>Bacteria</taxon>
        <taxon>Pseudomonadati</taxon>
        <taxon>Pseudomonadota</taxon>
        <taxon>Alphaproteobacteria</taxon>
        <taxon>Hyphomicrobiales</taxon>
        <taxon>Parvibaculaceae</taxon>
        <taxon>Parvibaculum</taxon>
    </lineage>
</organism>
<comment type="function">
    <text evidence="1">Participates actively in the response to hyperosmotic and heat shock by preventing the aggregation of stress-denatured proteins, in association with DnaK and GrpE. It is the nucleotide exchange factor for DnaK and may function as a thermosensor. Unfolded proteins bind initially to DnaJ; upon interaction with the DnaJ-bound protein, DnaK hydrolyzes its bound ATP, resulting in the formation of a stable complex. GrpE releases ADP from DnaK; ATP binding to DnaK triggers the release of the substrate protein, thus completing the reaction cycle. Several rounds of ATP-dependent interactions between DnaJ, DnaK and GrpE are required for fully efficient folding.</text>
</comment>
<comment type="subunit">
    <text evidence="1">Homodimer.</text>
</comment>
<comment type="subcellular location">
    <subcellularLocation>
        <location evidence="1">Cytoplasm</location>
    </subcellularLocation>
</comment>
<comment type="similarity">
    <text evidence="1">Belongs to the GrpE family.</text>
</comment>
<accession>A7HZ43</accession>